<name>EX7S_BACAN</name>
<organism>
    <name type="scientific">Bacillus anthracis</name>
    <dbReference type="NCBI Taxonomy" id="1392"/>
    <lineage>
        <taxon>Bacteria</taxon>
        <taxon>Bacillati</taxon>
        <taxon>Bacillota</taxon>
        <taxon>Bacilli</taxon>
        <taxon>Bacillales</taxon>
        <taxon>Bacillaceae</taxon>
        <taxon>Bacillus</taxon>
        <taxon>Bacillus cereus group</taxon>
    </lineage>
</organism>
<gene>
    <name evidence="1" type="primary">xseB</name>
    <name type="ordered locus">BA_4403</name>
    <name type="ordered locus">GBAA_4403</name>
    <name type="ordered locus">BAS4083</name>
</gene>
<sequence>MENKLSFEEAISQLEHLVSKLEQGDVPLEEAISYFKEGMELSKLCDEKLKNVQEQMAVILGEDGELEPFTALGDEA</sequence>
<reference key="1">
    <citation type="journal article" date="2003" name="Nature">
        <title>The genome sequence of Bacillus anthracis Ames and comparison to closely related bacteria.</title>
        <authorList>
            <person name="Read T.D."/>
            <person name="Peterson S.N."/>
            <person name="Tourasse N.J."/>
            <person name="Baillie L.W."/>
            <person name="Paulsen I.T."/>
            <person name="Nelson K.E."/>
            <person name="Tettelin H."/>
            <person name="Fouts D.E."/>
            <person name="Eisen J.A."/>
            <person name="Gill S.R."/>
            <person name="Holtzapple E.K."/>
            <person name="Okstad O.A."/>
            <person name="Helgason E."/>
            <person name="Rilstone J."/>
            <person name="Wu M."/>
            <person name="Kolonay J.F."/>
            <person name="Beanan M.J."/>
            <person name="Dodson R.J."/>
            <person name="Brinkac L.M."/>
            <person name="Gwinn M.L."/>
            <person name="DeBoy R.T."/>
            <person name="Madpu R."/>
            <person name="Daugherty S.C."/>
            <person name="Durkin A.S."/>
            <person name="Haft D.H."/>
            <person name="Nelson W.C."/>
            <person name="Peterson J.D."/>
            <person name="Pop M."/>
            <person name="Khouri H.M."/>
            <person name="Radune D."/>
            <person name="Benton J.L."/>
            <person name="Mahamoud Y."/>
            <person name="Jiang L."/>
            <person name="Hance I.R."/>
            <person name="Weidman J.F."/>
            <person name="Berry K.J."/>
            <person name="Plaut R.D."/>
            <person name="Wolf A.M."/>
            <person name="Watkins K.L."/>
            <person name="Nierman W.C."/>
            <person name="Hazen A."/>
            <person name="Cline R.T."/>
            <person name="Redmond C."/>
            <person name="Thwaite J.E."/>
            <person name="White O."/>
            <person name="Salzberg S.L."/>
            <person name="Thomason B."/>
            <person name="Friedlander A.M."/>
            <person name="Koehler T.M."/>
            <person name="Hanna P.C."/>
            <person name="Kolstoe A.-B."/>
            <person name="Fraser C.M."/>
        </authorList>
    </citation>
    <scope>NUCLEOTIDE SEQUENCE [LARGE SCALE GENOMIC DNA]</scope>
    <source>
        <strain>Ames / isolate Porton</strain>
    </source>
</reference>
<reference key="2">
    <citation type="journal article" date="2009" name="J. Bacteriol.">
        <title>The complete genome sequence of Bacillus anthracis Ames 'Ancestor'.</title>
        <authorList>
            <person name="Ravel J."/>
            <person name="Jiang L."/>
            <person name="Stanley S.T."/>
            <person name="Wilson M.R."/>
            <person name="Decker R.S."/>
            <person name="Read T.D."/>
            <person name="Worsham P."/>
            <person name="Keim P.S."/>
            <person name="Salzberg S.L."/>
            <person name="Fraser-Liggett C.M."/>
            <person name="Rasko D.A."/>
        </authorList>
    </citation>
    <scope>NUCLEOTIDE SEQUENCE [LARGE SCALE GENOMIC DNA]</scope>
    <source>
        <strain>Ames ancestor</strain>
    </source>
</reference>
<reference key="3">
    <citation type="submission" date="2004-01" db="EMBL/GenBank/DDBJ databases">
        <title>Complete genome sequence of Bacillus anthracis Sterne.</title>
        <authorList>
            <person name="Brettin T.S."/>
            <person name="Bruce D."/>
            <person name="Challacombe J.F."/>
            <person name="Gilna P."/>
            <person name="Han C."/>
            <person name="Hill K."/>
            <person name="Hitchcock P."/>
            <person name="Jackson P."/>
            <person name="Keim P."/>
            <person name="Longmire J."/>
            <person name="Lucas S."/>
            <person name="Okinaka R."/>
            <person name="Richardson P."/>
            <person name="Rubin E."/>
            <person name="Tice H."/>
        </authorList>
    </citation>
    <scope>NUCLEOTIDE SEQUENCE [LARGE SCALE GENOMIC DNA]</scope>
    <source>
        <strain>Sterne</strain>
    </source>
</reference>
<evidence type="ECO:0000255" key="1">
    <source>
        <dbReference type="HAMAP-Rule" id="MF_00337"/>
    </source>
</evidence>
<keyword id="KW-0963">Cytoplasm</keyword>
<keyword id="KW-0269">Exonuclease</keyword>
<keyword id="KW-0378">Hydrolase</keyword>
<keyword id="KW-0540">Nuclease</keyword>
<keyword id="KW-1185">Reference proteome</keyword>
<accession>Q81M52</accession>
<accession>Q6HTK5</accession>
<accession>Q6KMU5</accession>
<protein>
    <recommendedName>
        <fullName evidence="1">Exodeoxyribonuclease 7 small subunit</fullName>
        <ecNumber evidence="1">3.1.11.6</ecNumber>
    </recommendedName>
    <alternativeName>
        <fullName evidence="1">Exodeoxyribonuclease VII small subunit</fullName>
        <shortName evidence="1">Exonuclease VII small subunit</shortName>
    </alternativeName>
</protein>
<dbReference type="EC" id="3.1.11.6" evidence="1"/>
<dbReference type="EMBL" id="AE016879">
    <property type="protein sequence ID" value="AAP28117.1"/>
    <property type="molecule type" value="Genomic_DNA"/>
</dbReference>
<dbReference type="EMBL" id="AE017334">
    <property type="protein sequence ID" value="AAT33521.1"/>
    <property type="molecule type" value="Genomic_DNA"/>
</dbReference>
<dbReference type="EMBL" id="AE017225">
    <property type="protein sequence ID" value="AAT56384.1"/>
    <property type="molecule type" value="Genomic_DNA"/>
</dbReference>
<dbReference type="RefSeq" id="NP_846631.1">
    <property type="nucleotide sequence ID" value="NC_003997.3"/>
</dbReference>
<dbReference type="RefSeq" id="WP_000428423.1">
    <property type="nucleotide sequence ID" value="NZ_WXXJ01000027.1"/>
</dbReference>
<dbReference type="RefSeq" id="YP_030333.1">
    <property type="nucleotide sequence ID" value="NC_005945.1"/>
</dbReference>
<dbReference type="SMR" id="Q81M52"/>
<dbReference type="STRING" id="261594.GBAA_4403"/>
<dbReference type="DNASU" id="1087730"/>
<dbReference type="GeneID" id="93006923"/>
<dbReference type="KEGG" id="ban:BA_4403"/>
<dbReference type="KEGG" id="bar:GBAA_4403"/>
<dbReference type="KEGG" id="bat:BAS4083"/>
<dbReference type="PATRIC" id="fig|198094.11.peg.4371"/>
<dbReference type="eggNOG" id="COG1722">
    <property type="taxonomic scope" value="Bacteria"/>
</dbReference>
<dbReference type="HOGENOM" id="CLU_145918_3_1_9"/>
<dbReference type="OMA" id="PLNDYKG"/>
<dbReference type="OrthoDB" id="9798666at2"/>
<dbReference type="Proteomes" id="UP000000427">
    <property type="component" value="Chromosome"/>
</dbReference>
<dbReference type="Proteomes" id="UP000000594">
    <property type="component" value="Chromosome"/>
</dbReference>
<dbReference type="GO" id="GO:0005829">
    <property type="term" value="C:cytosol"/>
    <property type="evidence" value="ECO:0007669"/>
    <property type="project" value="TreeGrafter"/>
</dbReference>
<dbReference type="GO" id="GO:0009318">
    <property type="term" value="C:exodeoxyribonuclease VII complex"/>
    <property type="evidence" value="ECO:0007669"/>
    <property type="project" value="InterPro"/>
</dbReference>
<dbReference type="GO" id="GO:0008855">
    <property type="term" value="F:exodeoxyribonuclease VII activity"/>
    <property type="evidence" value="ECO:0007669"/>
    <property type="project" value="UniProtKB-UniRule"/>
</dbReference>
<dbReference type="GO" id="GO:0006308">
    <property type="term" value="P:DNA catabolic process"/>
    <property type="evidence" value="ECO:0007669"/>
    <property type="project" value="UniProtKB-UniRule"/>
</dbReference>
<dbReference type="FunFam" id="1.10.287.1040:FF:000002">
    <property type="entry name" value="Exodeoxyribonuclease 7 small subunit"/>
    <property type="match status" value="1"/>
</dbReference>
<dbReference type="Gene3D" id="1.10.287.1040">
    <property type="entry name" value="Exonuclease VII, small subunit"/>
    <property type="match status" value="1"/>
</dbReference>
<dbReference type="HAMAP" id="MF_00337">
    <property type="entry name" value="Exonuc_7_S"/>
    <property type="match status" value="1"/>
</dbReference>
<dbReference type="InterPro" id="IPR003761">
    <property type="entry name" value="Exonuc_VII_S"/>
</dbReference>
<dbReference type="InterPro" id="IPR037004">
    <property type="entry name" value="Exonuc_VII_ssu_sf"/>
</dbReference>
<dbReference type="NCBIfam" id="NF010666">
    <property type="entry name" value="PRK14063.1"/>
    <property type="match status" value="1"/>
</dbReference>
<dbReference type="NCBIfam" id="TIGR01280">
    <property type="entry name" value="xseB"/>
    <property type="match status" value="1"/>
</dbReference>
<dbReference type="PANTHER" id="PTHR34137">
    <property type="entry name" value="EXODEOXYRIBONUCLEASE 7 SMALL SUBUNIT"/>
    <property type="match status" value="1"/>
</dbReference>
<dbReference type="PANTHER" id="PTHR34137:SF1">
    <property type="entry name" value="EXODEOXYRIBONUCLEASE 7 SMALL SUBUNIT"/>
    <property type="match status" value="1"/>
</dbReference>
<dbReference type="Pfam" id="PF02609">
    <property type="entry name" value="Exonuc_VII_S"/>
    <property type="match status" value="1"/>
</dbReference>
<dbReference type="PIRSF" id="PIRSF006488">
    <property type="entry name" value="Exonuc_VII_S"/>
    <property type="match status" value="1"/>
</dbReference>
<dbReference type="SUPFAM" id="SSF116842">
    <property type="entry name" value="XseB-like"/>
    <property type="match status" value="1"/>
</dbReference>
<comment type="function">
    <text evidence="1">Bidirectionally degrades single-stranded DNA into large acid-insoluble oligonucleotides, which are then degraded further into small acid-soluble oligonucleotides.</text>
</comment>
<comment type="catalytic activity">
    <reaction evidence="1">
        <text>Exonucleolytic cleavage in either 5'- to 3'- or 3'- to 5'-direction to yield nucleoside 5'-phosphates.</text>
        <dbReference type="EC" id="3.1.11.6"/>
    </reaction>
</comment>
<comment type="subunit">
    <text evidence="1">Heterooligomer composed of large and small subunits.</text>
</comment>
<comment type="subcellular location">
    <subcellularLocation>
        <location evidence="1">Cytoplasm</location>
    </subcellularLocation>
</comment>
<comment type="similarity">
    <text evidence="1">Belongs to the XseB family.</text>
</comment>
<feature type="chain" id="PRO_0000206913" description="Exodeoxyribonuclease 7 small subunit">
    <location>
        <begin position="1"/>
        <end position="76"/>
    </location>
</feature>
<proteinExistence type="inferred from homology"/>